<reference key="1">
    <citation type="journal article" date="2009" name="J. Bacteriol.">
        <title>Complete genome sequence of Erythrobacter litoralis HTCC2594.</title>
        <authorList>
            <person name="Oh H.M."/>
            <person name="Giovannoni S.J."/>
            <person name="Ferriera S."/>
            <person name="Johnson J."/>
            <person name="Cho J.C."/>
        </authorList>
    </citation>
    <scope>NUCLEOTIDE SEQUENCE [LARGE SCALE GENOMIC DNA]</scope>
    <source>
        <strain>HTCC2594</strain>
    </source>
</reference>
<dbReference type="EMBL" id="CP000157">
    <property type="protein sequence ID" value="ABC62105.1"/>
    <property type="molecule type" value="Genomic_DNA"/>
</dbReference>
<dbReference type="RefSeq" id="WP_011412983.1">
    <property type="nucleotide sequence ID" value="NC_007722.1"/>
</dbReference>
<dbReference type="SMR" id="Q2NDY6"/>
<dbReference type="STRING" id="314225.ELI_00065"/>
<dbReference type="KEGG" id="eli:ELI_00065"/>
<dbReference type="eggNOG" id="COG0080">
    <property type="taxonomic scope" value="Bacteria"/>
</dbReference>
<dbReference type="HOGENOM" id="CLU_074237_2_1_5"/>
<dbReference type="OrthoDB" id="9802408at2"/>
<dbReference type="Proteomes" id="UP000008808">
    <property type="component" value="Chromosome"/>
</dbReference>
<dbReference type="GO" id="GO:0022625">
    <property type="term" value="C:cytosolic large ribosomal subunit"/>
    <property type="evidence" value="ECO:0007669"/>
    <property type="project" value="TreeGrafter"/>
</dbReference>
<dbReference type="GO" id="GO:0070180">
    <property type="term" value="F:large ribosomal subunit rRNA binding"/>
    <property type="evidence" value="ECO:0007669"/>
    <property type="project" value="UniProtKB-UniRule"/>
</dbReference>
<dbReference type="GO" id="GO:0003735">
    <property type="term" value="F:structural constituent of ribosome"/>
    <property type="evidence" value="ECO:0007669"/>
    <property type="project" value="InterPro"/>
</dbReference>
<dbReference type="GO" id="GO:0006412">
    <property type="term" value="P:translation"/>
    <property type="evidence" value="ECO:0007669"/>
    <property type="project" value="UniProtKB-UniRule"/>
</dbReference>
<dbReference type="CDD" id="cd00349">
    <property type="entry name" value="Ribosomal_L11"/>
    <property type="match status" value="1"/>
</dbReference>
<dbReference type="FunFam" id="3.30.1550.10:FF:000001">
    <property type="entry name" value="50S ribosomal protein L11"/>
    <property type="match status" value="1"/>
</dbReference>
<dbReference type="Gene3D" id="1.10.10.250">
    <property type="entry name" value="Ribosomal protein L11, C-terminal domain"/>
    <property type="match status" value="1"/>
</dbReference>
<dbReference type="Gene3D" id="3.30.1550.10">
    <property type="entry name" value="Ribosomal protein L11/L12, N-terminal domain"/>
    <property type="match status" value="1"/>
</dbReference>
<dbReference type="HAMAP" id="MF_00736">
    <property type="entry name" value="Ribosomal_uL11"/>
    <property type="match status" value="1"/>
</dbReference>
<dbReference type="InterPro" id="IPR000911">
    <property type="entry name" value="Ribosomal_uL11"/>
</dbReference>
<dbReference type="InterPro" id="IPR006519">
    <property type="entry name" value="Ribosomal_uL11_bac-typ"/>
</dbReference>
<dbReference type="InterPro" id="IPR020783">
    <property type="entry name" value="Ribosomal_uL11_C"/>
</dbReference>
<dbReference type="InterPro" id="IPR036769">
    <property type="entry name" value="Ribosomal_uL11_C_sf"/>
</dbReference>
<dbReference type="InterPro" id="IPR020784">
    <property type="entry name" value="Ribosomal_uL11_N"/>
</dbReference>
<dbReference type="InterPro" id="IPR036796">
    <property type="entry name" value="Ribosomal_uL11_N_sf"/>
</dbReference>
<dbReference type="NCBIfam" id="TIGR01632">
    <property type="entry name" value="L11_bact"/>
    <property type="match status" value="1"/>
</dbReference>
<dbReference type="PANTHER" id="PTHR11661">
    <property type="entry name" value="60S RIBOSOMAL PROTEIN L12"/>
    <property type="match status" value="1"/>
</dbReference>
<dbReference type="PANTHER" id="PTHR11661:SF1">
    <property type="entry name" value="LARGE RIBOSOMAL SUBUNIT PROTEIN UL11M"/>
    <property type="match status" value="1"/>
</dbReference>
<dbReference type="Pfam" id="PF00298">
    <property type="entry name" value="Ribosomal_L11"/>
    <property type="match status" value="1"/>
</dbReference>
<dbReference type="Pfam" id="PF03946">
    <property type="entry name" value="Ribosomal_L11_N"/>
    <property type="match status" value="1"/>
</dbReference>
<dbReference type="SMART" id="SM00649">
    <property type="entry name" value="RL11"/>
    <property type="match status" value="1"/>
</dbReference>
<dbReference type="SUPFAM" id="SSF54747">
    <property type="entry name" value="Ribosomal L11/L12e N-terminal domain"/>
    <property type="match status" value="1"/>
</dbReference>
<dbReference type="SUPFAM" id="SSF46906">
    <property type="entry name" value="Ribosomal protein L11, C-terminal domain"/>
    <property type="match status" value="1"/>
</dbReference>
<organism>
    <name type="scientific">Erythrobacter litoralis (strain HTCC2594)</name>
    <dbReference type="NCBI Taxonomy" id="314225"/>
    <lineage>
        <taxon>Bacteria</taxon>
        <taxon>Pseudomonadati</taxon>
        <taxon>Pseudomonadota</taxon>
        <taxon>Alphaproteobacteria</taxon>
        <taxon>Sphingomonadales</taxon>
        <taxon>Erythrobacteraceae</taxon>
        <taxon>Erythrobacter/Porphyrobacter group</taxon>
        <taxon>Erythrobacter</taxon>
    </lineage>
</organism>
<comment type="function">
    <text evidence="1">Forms part of the ribosomal stalk which helps the ribosome interact with GTP-bound translation factors.</text>
</comment>
<comment type="subunit">
    <text evidence="1">Part of the ribosomal stalk of the 50S ribosomal subunit. Interacts with L10 and the large rRNA to form the base of the stalk. L10 forms an elongated spine to which L12 dimers bind in a sequential fashion forming a multimeric L10(L12)X complex.</text>
</comment>
<comment type="PTM">
    <text evidence="1">One or more lysine residues are methylated.</text>
</comment>
<comment type="similarity">
    <text evidence="1">Belongs to the universal ribosomal protein uL11 family.</text>
</comment>
<accession>Q2NDY6</accession>
<feature type="chain" id="PRO_1000046176" description="Large ribosomal subunit protein uL11">
    <location>
        <begin position="1"/>
        <end position="143"/>
    </location>
</feature>
<name>RL11_ERYLH</name>
<proteinExistence type="inferred from homology"/>
<sequence>MAKKIDGYIKLMVPAGTANPSPPLGPALGQRGVNIMEFCKAFNAATDGMEKNAPVPTVITVYADRSFSFVTKQPTATYLIKKAAKIKKGSGETGKVSAGTIKQSQVKEIAETKMPDLNANDIDQAMKIIEGSCRAMGLEVVEG</sequence>
<protein>
    <recommendedName>
        <fullName evidence="1">Large ribosomal subunit protein uL11</fullName>
    </recommendedName>
    <alternativeName>
        <fullName evidence="2">50S ribosomal protein L11</fullName>
    </alternativeName>
</protein>
<evidence type="ECO:0000255" key="1">
    <source>
        <dbReference type="HAMAP-Rule" id="MF_00736"/>
    </source>
</evidence>
<evidence type="ECO:0000305" key="2"/>
<keyword id="KW-0488">Methylation</keyword>
<keyword id="KW-1185">Reference proteome</keyword>
<keyword id="KW-0687">Ribonucleoprotein</keyword>
<keyword id="KW-0689">Ribosomal protein</keyword>
<keyword id="KW-0694">RNA-binding</keyword>
<keyword id="KW-0699">rRNA-binding</keyword>
<gene>
    <name evidence="1" type="primary">rplK</name>
    <name type="ordered locus">ELI_00065</name>
</gene>